<reference key="1">
    <citation type="journal article" date="2008" name="J. Bacteriol.">
        <title>The complete genome sequence of Actinobacillus pleuropneumoniae L20 (serotype 5b).</title>
        <authorList>
            <person name="Foote S.J."/>
            <person name="Bosse J.T."/>
            <person name="Bouevitch A.B."/>
            <person name="Langford P.R."/>
            <person name="Young N.M."/>
            <person name="Nash J.H.E."/>
        </authorList>
    </citation>
    <scope>NUCLEOTIDE SEQUENCE [LARGE SCALE GENOMIC DNA]</scope>
    <source>
        <strain>L20</strain>
    </source>
</reference>
<accession>A3N3F7</accession>
<protein>
    <recommendedName>
        <fullName evidence="1">2,3,4,5-tetrahydropyridine-2,6-dicarboxylate N-succinyltransferase</fullName>
        <ecNumber evidence="1">2.3.1.117</ecNumber>
    </recommendedName>
    <alternativeName>
        <fullName evidence="1">Tetrahydrodipicolinate N-succinyltransferase</fullName>
        <shortName evidence="1">THDP succinyltransferase</shortName>
        <shortName evidence="1">THP succinyltransferase</shortName>
        <shortName evidence="1">Tetrahydropicolinate succinylase</shortName>
    </alternativeName>
</protein>
<gene>
    <name evidence="1" type="primary">dapD</name>
    <name type="ordered locus">APL_1861</name>
</gene>
<evidence type="ECO:0000255" key="1">
    <source>
        <dbReference type="HAMAP-Rule" id="MF_00811"/>
    </source>
</evidence>
<sequence length="274" mass="29692">MSLQAIIEAAFERRAEITPKTVDAETRAAIEEVIEGLDSGKYRVAEKIDGEWVTHQWLKKAVLLSFRINDNQIIDGAETKYYDKVALKFADYTEERFAQEGFRVVPSATVRKGAYISKNCVLMPSYVNIGAYVGEGTMVDTWATVGSCAQIGKNVHLSGGVGIGGVLEPLQANPTIIGDNCFIGARSEVVEGVIVEDGCVISMGVFIGQSTRIYDRETGEIHYGRVPAGSVVVSGSLPSKCGKYSLYCAVIVKKVDAKTLGKVGINELLRTIEE</sequence>
<dbReference type="EC" id="2.3.1.117" evidence="1"/>
<dbReference type="EMBL" id="CP000569">
    <property type="protein sequence ID" value="ABN74943.1"/>
    <property type="molecule type" value="Genomic_DNA"/>
</dbReference>
<dbReference type="RefSeq" id="WP_005599515.1">
    <property type="nucleotide sequence ID" value="NC_009053.1"/>
</dbReference>
<dbReference type="SMR" id="A3N3F7"/>
<dbReference type="STRING" id="416269.APL_1861"/>
<dbReference type="EnsemblBacteria" id="ABN74943">
    <property type="protein sequence ID" value="ABN74943"/>
    <property type="gene ID" value="APL_1861"/>
</dbReference>
<dbReference type="GeneID" id="48600166"/>
<dbReference type="KEGG" id="apl:APL_1861"/>
<dbReference type="eggNOG" id="COG2171">
    <property type="taxonomic scope" value="Bacteria"/>
</dbReference>
<dbReference type="HOGENOM" id="CLU_050859_0_1_6"/>
<dbReference type="UniPathway" id="UPA00034">
    <property type="reaction ID" value="UER00019"/>
</dbReference>
<dbReference type="Proteomes" id="UP000001432">
    <property type="component" value="Chromosome"/>
</dbReference>
<dbReference type="GO" id="GO:0005737">
    <property type="term" value="C:cytoplasm"/>
    <property type="evidence" value="ECO:0007669"/>
    <property type="project" value="UniProtKB-SubCell"/>
</dbReference>
<dbReference type="GO" id="GO:0008666">
    <property type="term" value="F:2,3,4,5-tetrahydropyridine-2,6-dicarboxylate N-succinyltransferase activity"/>
    <property type="evidence" value="ECO:0007669"/>
    <property type="project" value="UniProtKB-UniRule"/>
</dbReference>
<dbReference type="GO" id="GO:0016779">
    <property type="term" value="F:nucleotidyltransferase activity"/>
    <property type="evidence" value="ECO:0007669"/>
    <property type="project" value="TreeGrafter"/>
</dbReference>
<dbReference type="GO" id="GO:0019877">
    <property type="term" value="P:diaminopimelate biosynthetic process"/>
    <property type="evidence" value="ECO:0007669"/>
    <property type="project" value="UniProtKB-UniRule"/>
</dbReference>
<dbReference type="GO" id="GO:0009089">
    <property type="term" value="P:lysine biosynthetic process via diaminopimelate"/>
    <property type="evidence" value="ECO:0007669"/>
    <property type="project" value="UniProtKB-UniRule"/>
</dbReference>
<dbReference type="CDD" id="cd03350">
    <property type="entry name" value="LbH_THP_succinylT"/>
    <property type="match status" value="1"/>
</dbReference>
<dbReference type="Gene3D" id="2.160.10.10">
    <property type="entry name" value="Hexapeptide repeat proteins"/>
    <property type="match status" value="1"/>
</dbReference>
<dbReference type="Gene3D" id="1.10.166.10">
    <property type="entry name" value="Tetrahydrodipicolinate-N-succinyltransferase, N-terminal domain"/>
    <property type="match status" value="1"/>
</dbReference>
<dbReference type="HAMAP" id="MF_00811">
    <property type="entry name" value="DapD"/>
    <property type="match status" value="1"/>
</dbReference>
<dbReference type="InterPro" id="IPR005664">
    <property type="entry name" value="DapD_Trfase_Hexpep_rpt_fam"/>
</dbReference>
<dbReference type="InterPro" id="IPR001451">
    <property type="entry name" value="Hexapep"/>
</dbReference>
<dbReference type="InterPro" id="IPR018357">
    <property type="entry name" value="Hexapep_transf_CS"/>
</dbReference>
<dbReference type="InterPro" id="IPR023180">
    <property type="entry name" value="THP_succinylTrfase_dom1"/>
</dbReference>
<dbReference type="InterPro" id="IPR037133">
    <property type="entry name" value="THP_succinylTrfase_N_sf"/>
</dbReference>
<dbReference type="InterPro" id="IPR011004">
    <property type="entry name" value="Trimer_LpxA-like_sf"/>
</dbReference>
<dbReference type="NCBIfam" id="TIGR00965">
    <property type="entry name" value="dapD"/>
    <property type="match status" value="1"/>
</dbReference>
<dbReference type="NCBIfam" id="NF008808">
    <property type="entry name" value="PRK11830.1"/>
    <property type="match status" value="1"/>
</dbReference>
<dbReference type="PANTHER" id="PTHR19136:SF52">
    <property type="entry name" value="2,3,4,5-TETRAHYDROPYRIDINE-2,6-DICARBOXYLATE N-SUCCINYLTRANSFERASE"/>
    <property type="match status" value="1"/>
</dbReference>
<dbReference type="PANTHER" id="PTHR19136">
    <property type="entry name" value="MOLYBDENUM COFACTOR GUANYLYLTRANSFERASE"/>
    <property type="match status" value="1"/>
</dbReference>
<dbReference type="Pfam" id="PF14602">
    <property type="entry name" value="Hexapep_2"/>
    <property type="match status" value="1"/>
</dbReference>
<dbReference type="Pfam" id="PF14805">
    <property type="entry name" value="THDPS_N_2"/>
    <property type="match status" value="1"/>
</dbReference>
<dbReference type="SUPFAM" id="SSF51161">
    <property type="entry name" value="Trimeric LpxA-like enzymes"/>
    <property type="match status" value="1"/>
</dbReference>
<dbReference type="PROSITE" id="PS00101">
    <property type="entry name" value="HEXAPEP_TRANSFERASES"/>
    <property type="match status" value="1"/>
</dbReference>
<organism>
    <name type="scientific">Actinobacillus pleuropneumoniae serotype 5b (strain L20)</name>
    <dbReference type="NCBI Taxonomy" id="416269"/>
    <lineage>
        <taxon>Bacteria</taxon>
        <taxon>Pseudomonadati</taxon>
        <taxon>Pseudomonadota</taxon>
        <taxon>Gammaproteobacteria</taxon>
        <taxon>Pasteurellales</taxon>
        <taxon>Pasteurellaceae</taxon>
        <taxon>Actinobacillus</taxon>
    </lineage>
</organism>
<proteinExistence type="inferred from homology"/>
<feature type="chain" id="PRO_1000047113" description="2,3,4,5-tetrahydropyridine-2,6-dicarboxylate N-succinyltransferase">
    <location>
        <begin position="1"/>
        <end position="274"/>
    </location>
</feature>
<feature type="binding site" evidence="1">
    <location>
        <position position="103"/>
    </location>
    <ligand>
        <name>substrate</name>
    </ligand>
</feature>
<feature type="binding site" evidence="1">
    <location>
        <position position="140"/>
    </location>
    <ligand>
        <name>substrate</name>
    </ligand>
</feature>
<keyword id="KW-0012">Acyltransferase</keyword>
<keyword id="KW-0028">Amino-acid biosynthesis</keyword>
<keyword id="KW-0963">Cytoplasm</keyword>
<keyword id="KW-0220">Diaminopimelate biosynthesis</keyword>
<keyword id="KW-0457">Lysine biosynthesis</keyword>
<keyword id="KW-1185">Reference proteome</keyword>
<keyword id="KW-0677">Repeat</keyword>
<keyword id="KW-0808">Transferase</keyword>
<comment type="catalytic activity">
    <reaction evidence="1">
        <text>(S)-2,3,4,5-tetrahydrodipicolinate + succinyl-CoA + H2O = (S)-2-succinylamino-6-oxoheptanedioate + CoA</text>
        <dbReference type="Rhea" id="RHEA:17325"/>
        <dbReference type="ChEBI" id="CHEBI:15377"/>
        <dbReference type="ChEBI" id="CHEBI:15685"/>
        <dbReference type="ChEBI" id="CHEBI:16845"/>
        <dbReference type="ChEBI" id="CHEBI:57287"/>
        <dbReference type="ChEBI" id="CHEBI:57292"/>
        <dbReference type="EC" id="2.3.1.117"/>
    </reaction>
</comment>
<comment type="pathway">
    <text evidence="1">Amino-acid biosynthesis; L-lysine biosynthesis via DAP pathway; LL-2,6-diaminopimelate from (S)-tetrahydrodipicolinate (succinylase route): step 1/3.</text>
</comment>
<comment type="subunit">
    <text evidence="1">Homotrimer.</text>
</comment>
<comment type="subcellular location">
    <subcellularLocation>
        <location evidence="1">Cytoplasm</location>
    </subcellularLocation>
</comment>
<comment type="similarity">
    <text evidence="1">Belongs to the transferase hexapeptide repeat family.</text>
</comment>
<name>DAPD_ACTP2</name>